<gene>
    <name evidence="1" type="primary">ndhI</name>
</gene>
<protein>
    <recommendedName>
        <fullName evidence="1">NAD(P)H-quinone oxidoreductase subunit I, chloroplastic</fullName>
        <ecNumber evidence="1">7.1.1.-</ecNumber>
    </recommendedName>
    <alternativeName>
        <fullName evidence="1">NAD(P)H dehydrogenase subunit I</fullName>
        <shortName evidence="1">NDH subunit I</shortName>
    </alternativeName>
    <alternativeName>
        <fullName evidence="1">NADH-plastoquinone oxidoreductase subunit I</fullName>
    </alternativeName>
</protein>
<reference key="1">
    <citation type="submission" date="2003-01" db="EMBL/GenBank/DDBJ databases">
        <title>Chloroplast DNA phylogeny of tribe Heliantheae (Asteraceae).</title>
        <authorList>
            <person name="Panero J.L."/>
            <person name="Baldwin B.G."/>
            <person name="Schilling E.E."/>
            <person name="Clevinger J.A."/>
        </authorList>
    </citation>
    <scope>NUCLEOTIDE SEQUENCE [GENOMIC DNA]</scope>
</reference>
<accession>Q8HVN4</accession>
<organism>
    <name type="scientific">Parthenium hysterophorus</name>
    <name type="common">Santa Maria feverfew</name>
    <dbReference type="NCBI Taxonomy" id="183063"/>
    <lineage>
        <taxon>Eukaryota</taxon>
        <taxon>Viridiplantae</taxon>
        <taxon>Streptophyta</taxon>
        <taxon>Embryophyta</taxon>
        <taxon>Tracheophyta</taxon>
        <taxon>Spermatophyta</taxon>
        <taxon>Magnoliopsida</taxon>
        <taxon>eudicotyledons</taxon>
        <taxon>Gunneridae</taxon>
        <taxon>Pentapetalae</taxon>
        <taxon>asterids</taxon>
        <taxon>campanulids</taxon>
        <taxon>Asterales</taxon>
        <taxon>Asteraceae</taxon>
        <taxon>Asteroideae</taxon>
        <taxon>Heliantheae alliance</taxon>
        <taxon>Heliantheae</taxon>
        <taxon>Parthenium</taxon>
    </lineage>
</organism>
<evidence type="ECO:0000255" key="1">
    <source>
        <dbReference type="HAMAP-Rule" id="MF_01351"/>
    </source>
</evidence>
<sequence length="166" mass="19552">MFPMVTEFMNYGQQTVRAARYIGQGFMITLSHANRLPVTIQYPYEKLITSERFRGRIHFEFDKCIACEVCVRVCPIDLPVVDWKLETDIRKKRLLNYSIDFGICIFCGNCVEYCPTNCLSMTEEYELSTYDRHELNYNQIALGRLPMSIIDDYTIRTIFNLPERKT</sequence>
<proteinExistence type="inferred from homology"/>
<name>NDHI_PARHY</name>
<comment type="function">
    <text evidence="1">NDH shuttles electrons from NAD(P)H:plastoquinone, via FMN and iron-sulfur (Fe-S) centers, to quinones in the photosynthetic chain and possibly in a chloroplast respiratory chain. The immediate electron acceptor for the enzyme in this species is believed to be plastoquinone. Couples the redox reaction to proton translocation, and thus conserves the redox energy in a proton gradient.</text>
</comment>
<comment type="catalytic activity">
    <reaction evidence="1">
        <text>a plastoquinone + NADH + (n+1) H(+)(in) = a plastoquinol + NAD(+) + n H(+)(out)</text>
        <dbReference type="Rhea" id="RHEA:42608"/>
        <dbReference type="Rhea" id="RHEA-COMP:9561"/>
        <dbReference type="Rhea" id="RHEA-COMP:9562"/>
        <dbReference type="ChEBI" id="CHEBI:15378"/>
        <dbReference type="ChEBI" id="CHEBI:17757"/>
        <dbReference type="ChEBI" id="CHEBI:57540"/>
        <dbReference type="ChEBI" id="CHEBI:57945"/>
        <dbReference type="ChEBI" id="CHEBI:62192"/>
    </reaction>
</comment>
<comment type="catalytic activity">
    <reaction evidence="1">
        <text>a plastoquinone + NADPH + (n+1) H(+)(in) = a plastoquinol + NADP(+) + n H(+)(out)</text>
        <dbReference type="Rhea" id="RHEA:42612"/>
        <dbReference type="Rhea" id="RHEA-COMP:9561"/>
        <dbReference type="Rhea" id="RHEA-COMP:9562"/>
        <dbReference type="ChEBI" id="CHEBI:15378"/>
        <dbReference type="ChEBI" id="CHEBI:17757"/>
        <dbReference type="ChEBI" id="CHEBI:57783"/>
        <dbReference type="ChEBI" id="CHEBI:58349"/>
        <dbReference type="ChEBI" id="CHEBI:62192"/>
    </reaction>
</comment>
<comment type="cofactor">
    <cofactor evidence="1">
        <name>[4Fe-4S] cluster</name>
        <dbReference type="ChEBI" id="CHEBI:49883"/>
    </cofactor>
    <text evidence="1">Binds 2 [4Fe-4S] clusters per subunit.</text>
</comment>
<comment type="subunit">
    <text evidence="1">NDH is composed of at least 16 different subunits, 5 of which are encoded in the nucleus.</text>
</comment>
<comment type="subcellular location">
    <subcellularLocation>
        <location evidence="1">Plastid</location>
        <location evidence="1">Chloroplast thylakoid membrane</location>
        <topology evidence="1">Peripheral membrane protein</topology>
    </subcellularLocation>
</comment>
<comment type="similarity">
    <text evidence="1">Belongs to the complex I 23 kDa subunit family.</text>
</comment>
<dbReference type="EC" id="7.1.1.-" evidence="1"/>
<dbReference type="EMBL" id="AF383829">
    <property type="protein sequence ID" value="AAN61770.1"/>
    <property type="molecule type" value="Genomic_DNA"/>
</dbReference>
<dbReference type="RefSeq" id="YP_011044801.1">
    <property type="nucleotide sequence ID" value="NC_086650.1"/>
</dbReference>
<dbReference type="SMR" id="Q8HVN4"/>
<dbReference type="GeneID" id="88574957"/>
<dbReference type="GO" id="GO:0009535">
    <property type="term" value="C:chloroplast thylakoid membrane"/>
    <property type="evidence" value="ECO:0007669"/>
    <property type="project" value="UniProtKB-SubCell"/>
</dbReference>
<dbReference type="GO" id="GO:0051539">
    <property type="term" value="F:4 iron, 4 sulfur cluster binding"/>
    <property type="evidence" value="ECO:0007669"/>
    <property type="project" value="UniProtKB-KW"/>
</dbReference>
<dbReference type="GO" id="GO:0005506">
    <property type="term" value="F:iron ion binding"/>
    <property type="evidence" value="ECO:0007669"/>
    <property type="project" value="UniProtKB-UniRule"/>
</dbReference>
<dbReference type="GO" id="GO:0008137">
    <property type="term" value="F:NADH dehydrogenase (ubiquinone) activity"/>
    <property type="evidence" value="ECO:0007669"/>
    <property type="project" value="InterPro"/>
</dbReference>
<dbReference type="GO" id="GO:0048038">
    <property type="term" value="F:quinone binding"/>
    <property type="evidence" value="ECO:0007669"/>
    <property type="project" value="UniProtKB-KW"/>
</dbReference>
<dbReference type="GO" id="GO:0019684">
    <property type="term" value="P:photosynthesis, light reaction"/>
    <property type="evidence" value="ECO:0007669"/>
    <property type="project" value="UniProtKB-UniRule"/>
</dbReference>
<dbReference type="FunFam" id="3.30.70.3270:FF:000006">
    <property type="entry name" value="NAD(P)H-quinone oxidoreductase subunit I, chloroplastic"/>
    <property type="match status" value="1"/>
</dbReference>
<dbReference type="Gene3D" id="3.30.70.3270">
    <property type="match status" value="1"/>
</dbReference>
<dbReference type="HAMAP" id="MF_01351">
    <property type="entry name" value="NDH1_NuoI"/>
    <property type="match status" value="1"/>
</dbReference>
<dbReference type="InterPro" id="IPR017896">
    <property type="entry name" value="4Fe4S_Fe-S-bd"/>
</dbReference>
<dbReference type="InterPro" id="IPR017900">
    <property type="entry name" value="4Fe4S_Fe_S_CS"/>
</dbReference>
<dbReference type="InterPro" id="IPR010226">
    <property type="entry name" value="NADH_quinone_OxRdtase_chainI"/>
</dbReference>
<dbReference type="InterPro" id="IPR004497">
    <property type="entry name" value="NDHI"/>
</dbReference>
<dbReference type="NCBIfam" id="TIGR00403">
    <property type="entry name" value="ndhI"/>
    <property type="match status" value="1"/>
</dbReference>
<dbReference type="NCBIfam" id="TIGR01971">
    <property type="entry name" value="NuoI"/>
    <property type="match status" value="1"/>
</dbReference>
<dbReference type="NCBIfam" id="NF004537">
    <property type="entry name" value="PRK05888.1-3"/>
    <property type="match status" value="1"/>
</dbReference>
<dbReference type="PANTHER" id="PTHR47275">
    <property type="entry name" value="NAD(P)H-QUINONE OXIDOREDUCTASE SUBUNIT I, CHLOROPLASTIC"/>
    <property type="match status" value="1"/>
</dbReference>
<dbReference type="PANTHER" id="PTHR47275:SF1">
    <property type="entry name" value="NAD(P)H-QUINONE OXIDOREDUCTASE SUBUNIT I, CHLOROPLASTIC"/>
    <property type="match status" value="1"/>
</dbReference>
<dbReference type="Pfam" id="PF00037">
    <property type="entry name" value="Fer4"/>
    <property type="match status" value="2"/>
</dbReference>
<dbReference type="SUPFAM" id="SSF54862">
    <property type="entry name" value="4Fe-4S ferredoxins"/>
    <property type="match status" value="1"/>
</dbReference>
<dbReference type="PROSITE" id="PS00198">
    <property type="entry name" value="4FE4S_FER_1"/>
    <property type="match status" value="2"/>
</dbReference>
<dbReference type="PROSITE" id="PS51379">
    <property type="entry name" value="4FE4S_FER_2"/>
    <property type="match status" value="2"/>
</dbReference>
<keyword id="KW-0004">4Fe-4S</keyword>
<keyword id="KW-0150">Chloroplast</keyword>
<keyword id="KW-0408">Iron</keyword>
<keyword id="KW-0411">Iron-sulfur</keyword>
<keyword id="KW-0472">Membrane</keyword>
<keyword id="KW-0479">Metal-binding</keyword>
<keyword id="KW-0520">NAD</keyword>
<keyword id="KW-0521">NADP</keyword>
<keyword id="KW-0934">Plastid</keyword>
<keyword id="KW-0618">Plastoquinone</keyword>
<keyword id="KW-0874">Quinone</keyword>
<keyword id="KW-0677">Repeat</keyword>
<keyword id="KW-0793">Thylakoid</keyword>
<keyword id="KW-1278">Translocase</keyword>
<geneLocation type="chloroplast"/>
<feature type="chain" id="PRO_0000250827" description="NAD(P)H-quinone oxidoreductase subunit I, chloroplastic">
    <location>
        <begin position="1"/>
        <end position="166"/>
    </location>
</feature>
<feature type="domain" description="4Fe-4S ferredoxin-type 1" evidence="1">
    <location>
        <begin position="55"/>
        <end position="84"/>
    </location>
</feature>
<feature type="domain" description="4Fe-4S ferredoxin-type 2" evidence="1">
    <location>
        <begin position="95"/>
        <end position="124"/>
    </location>
</feature>
<feature type="binding site" evidence="1">
    <location>
        <position position="64"/>
    </location>
    <ligand>
        <name>[4Fe-4S] cluster</name>
        <dbReference type="ChEBI" id="CHEBI:49883"/>
        <label>1</label>
    </ligand>
</feature>
<feature type="binding site" evidence="1">
    <location>
        <position position="67"/>
    </location>
    <ligand>
        <name>[4Fe-4S] cluster</name>
        <dbReference type="ChEBI" id="CHEBI:49883"/>
        <label>1</label>
    </ligand>
</feature>
<feature type="binding site" evidence="1">
    <location>
        <position position="70"/>
    </location>
    <ligand>
        <name>[4Fe-4S] cluster</name>
        <dbReference type="ChEBI" id="CHEBI:49883"/>
        <label>1</label>
    </ligand>
</feature>
<feature type="binding site" evidence="1">
    <location>
        <position position="74"/>
    </location>
    <ligand>
        <name>[4Fe-4S] cluster</name>
        <dbReference type="ChEBI" id="CHEBI:49883"/>
        <label>2</label>
    </ligand>
</feature>
<feature type="binding site" evidence="1">
    <location>
        <position position="104"/>
    </location>
    <ligand>
        <name>[4Fe-4S] cluster</name>
        <dbReference type="ChEBI" id="CHEBI:49883"/>
        <label>2</label>
    </ligand>
</feature>
<feature type="binding site" evidence="1">
    <location>
        <position position="107"/>
    </location>
    <ligand>
        <name>[4Fe-4S] cluster</name>
        <dbReference type="ChEBI" id="CHEBI:49883"/>
        <label>2</label>
    </ligand>
</feature>
<feature type="binding site" evidence="1">
    <location>
        <position position="110"/>
    </location>
    <ligand>
        <name>[4Fe-4S] cluster</name>
        <dbReference type="ChEBI" id="CHEBI:49883"/>
        <label>2</label>
    </ligand>
</feature>
<feature type="binding site" evidence="1">
    <location>
        <position position="114"/>
    </location>
    <ligand>
        <name>[4Fe-4S] cluster</name>
        <dbReference type="ChEBI" id="CHEBI:49883"/>
        <label>1</label>
    </ligand>
</feature>